<protein>
    <recommendedName>
        <fullName>Uncharacterized protein ycf81</fullName>
        <shortName>RF81</shortName>
    </recommendedName>
</protein>
<feature type="chain" id="PRO_0000217408" description="Uncharacterized protein ycf81">
    <location>
        <begin position="1"/>
        <end position="382"/>
    </location>
</feature>
<feature type="domain" description="TRAM" evidence="1">
    <location>
        <begin position="314"/>
        <end position="375"/>
    </location>
</feature>
<geneLocation type="chloroplast"/>
<keyword id="KW-0150">Chloroplast</keyword>
<keyword id="KW-0934">Plastid</keyword>
<gene>
    <name type="primary">ycf81</name>
</gene>
<proteinExistence type="inferred from homology"/>
<comment type="subcellular location">
    <subcellularLocation>
        <location>Plastid</location>
        <location>Chloroplast</location>
    </subcellularLocation>
</comment>
<comment type="similarity">
    <text evidence="2">Belongs to the ycf81 family.</text>
</comment>
<organism>
    <name type="scientific">Mesostigma viride</name>
    <name type="common">Green alga</name>
    <dbReference type="NCBI Taxonomy" id="41882"/>
    <lineage>
        <taxon>Eukaryota</taxon>
        <taxon>Viridiplantae</taxon>
        <taxon>Streptophyta</taxon>
        <taxon>Mesostigmatophyceae</taxon>
        <taxon>Mesostigmatales</taxon>
        <taxon>Mesostigmataceae</taxon>
        <taxon>Mesostigma</taxon>
    </lineage>
</organism>
<evidence type="ECO:0000255" key="1">
    <source>
        <dbReference type="PROSITE-ProRule" id="PRU00208"/>
    </source>
</evidence>
<evidence type="ECO:0000305" key="2"/>
<accession>Q9MUP3</accession>
<name>YCF81_MESVI</name>
<sequence length="382" mass="43965">MYFQNIDALIFSKLLDTLLNIFFLLFFLVLGAEFTLYIINVYFPNLLLYGNALGIKFVLSILGSLIAFPIGLVFQNNYKNFLNYINNFTVDIFFTSLLSIIGALFIANLYFSFLDISSILKEFLFIKYLLRLLIQTILCYSGFILVTFHSDYLLNILVPEMAEAIFSYNKIVRPSITRVLHTSYIINHNIIAIFQSQFVEGLVLIPKSTIQELQILNNSKNFKDKYLGRLGFSRLNELKYNYFDQIILESSLTNCHENVLFKYNKTYNNEQQNIVLMSSCSNNIKESNISQLLISNLFPLIININKLIELLKLPYLSGESFYLQIVRKGKRLGQGIGYLEDGTMVIVNAGSKYIGQKIKVIVKKVWQKSTGKILFTQPIKNS</sequence>
<reference key="1">
    <citation type="journal article" date="2000" name="Nature">
        <title>Ancestral chloroplast genome in Mesostigma viride reveals an early branch of green plant evolution.</title>
        <authorList>
            <person name="Lemieux C."/>
            <person name="Otis C."/>
            <person name="Turmel M."/>
        </authorList>
    </citation>
    <scope>NUCLEOTIDE SEQUENCE [LARGE SCALE GENOMIC DNA]</scope>
    <source>
        <strain>NIES-296 / KY-14 / CCMP 2046</strain>
    </source>
</reference>
<dbReference type="EMBL" id="AF166114">
    <property type="protein sequence ID" value="AAF43857.1"/>
    <property type="molecule type" value="Genomic_DNA"/>
</dbReference>
<dbReference type="RefSeq" id="NP_038417.1">
    <property type="nucleotide sequence ID" value="NC_002186.1"/>
</dbReference>
<dbReference type="SMR" id="Q9MUP3"/>
<dbReference type="GeneID" id="800929"/>
<dbReference type="GO" id="GO:0009507">
    <property type="term" value="C:chloroplast"/>
    <property type="evidence" value="ECO:0007669"/>
    <property type="project" value="UniProtKB-SubCell"/>
</dbReference>
<dbReference type="Gene3D" id="3.40.50.1010">
    <property type="entry name" value="5'-nuclease"/>
    <property type="match status" value="1"/>
</dbReference>
<dbReference type="InterPro" id="IPR002716">
    <property type="entry name" value="PIN_dom"/>
</dbReference>
<dbReference type="InterPro" id="IPR002792">
    <property type="entry name" value="TRAM_dom"/>
</dbReference>
<dbReference type="SMART" id="SM00670">
    <property type="entry name" value="PINc"/>
    <property type="match status" value="1"/>
</dbReference>
<dbReference type="PROSITE" id="PS50926">
    <property type="entry name" value="TRAM"/>
    <property type="match status" value="1"/>
</dbReference>